<evidence type="ECO:0000255" key="1"/>
<evidence type="ECO:0000255" key="2">
    <source>
        <dbReference type="HAMAP-Rule" id="MF_00038"/>
    </source>
</evidence>
<evidence type="ECO:0000269" key="3">
    <source>
    </source>
</evidence>
<evidence type="ECO:0000269" key="4">
    <source>
    </source>
</evidence>
<evidence type="ECO:0000305" key="5"/>
<name>MRAY_STAA8</name>
<feature type="chain" id="PRO_0000247938" description="Phospho-N-acetylmuramoyl-pentapeptide-transferase">
    <location>
        <begin position="1"/>
        <end position="321"/>
    </location>
</feature>
<feature type="transmembrane region" description="Helical">
    <location>
        <begin position="1"/>
        <end position="21"/>
    </location>
</feature>
<feature type="topological domain" description="Cytoplasmic" evidence="1">
    <location>
        <begin position="22"/>
        <end position="52"/>
    </location>
</feature>
<feature type="transmembrane region" description="Helical">
    <location>
        <begin position="53"/>
        <end position="69"/>
    </location>
</feature>
<feature type="topological domain" description="Extracellular" evidence="1">
    <location>
        <begin position="70"/>
        <end position="75"/>
    </location>
</feature>
<feature type="transmembrane region" description="Helical">
    <location>
        <begin position="76"/>
        <end position="91"/>
    </location>
</feature>
<feature type="topological domain" description="Cytoplasmic" evidence="1">
    <location>
        <begin position="92"/>
        <end position="111"/>
    </location>
</feature>
<feature type="transmembrane region" description="Helical">
    <location>
        <begin position="112"/>
        <end position="133"/>
    </location>
</feature>
<feature type="topological domain" description="Extracellular" evidence="1">
    <location>
        <begin position="134"/>
        <end position="150"/>
    </location>
</feature>
<feature type="transmembrane region" description="Helical">
    <location>
        <begin position="151"/>
        <end position="165"/>
    </location>
</feature>
<feature type="topological domain" description="Cytoplasmic" evidence="1">
    <location>
        <begin position="166"/>
        <end position="176"/>
    </location>
</feature>
<feature type="transmembrane region" description="Helical">
    <location>
        <begin position="177"/>
        <end position="197"/>
    </location>
</feature>
<feature type="topological domain" description="Extracellular" evidence="1">
    <location>
        <begin position="198"/>
        <end position="202"/>
    </location>
</feature>
<feature type="transmembrane region" description="Helical">
    <location>
        <begin position="203"/>
        <end position="216"/>
    </location>
</feature>
<feature type="topological domain" description="Cytoplasmic" evidence="1">
    <location>
        <begin position="217"/>
        <end position="232"/>
    </location>
</feature>
<feature type="transmembrane region" description="Helical">
    <location>
        <begin position="233"/>
        <end position="246"/>
    </location>
</feature>
<feature type="topological domain" description="Extracellular" evidence="1">
    <location>
        <begin position="247"/>
        <end position="249"/>
    </location>
</feature>
<feature type="transmembrane region" description="Helical">
    <location>
        <begin position="250"/>
        <end position="268"/>
    </location>
</feature>
<feature type="topological domain" description="Cytoplasmic" evidence="1">
    <location>
        <begin position="269"/>
        <end position="300"/>
    </location>
</feature>
<feature type="transmembrane region" description="Helical">
    <location>
        <begin position="301"/>
        <end position="320"/>
    </location>
</feature>
<feature type="topological domain" description="Extracellular" evidence="1">
    <location>
        <position position="321"/>
    </location>
</feature>
<feature type="sequence conflict" description="In Ref. 1; AAC45625." evidence="5" ref="1">
    <original>Q</original>
    <variation>P</variation>
    <location>
        <position position="104"/>
    </location>
</feature>
<feature type="sequence conflict" description="In Ref. 1; AAC45625." evidence="5" ref="1">
    <original>F</original>
    <variation>I</variation>
    <location>
        <position position="254"/>
    </location>
</feature>
<feature type="sequence conflict" description="In Ref. 1; AAC45625." evidence="5" ref="1">
    <original>KVVTVFWAVGLISGLIGLWIGVH</original>
    <variation>ESTYSILGCWSDFRFNRFMDWSALRCLIIQG</variation>
    <location>
        <begin position="299"/>
        <end position="321"/>
    </location>
</feature>
<keyword id="KW-0131">Cell cycle</keyword>
<keyword id="KW-0132">Cell division</keyword>
<keyword id="KW-1003">Cell membrane</keyword>
<keyword id="KW-0133">Cell shape</keyword>
<keyword id="KW-0961">Cell wall biogenesis/degradation</keyword>
<keyword id="KW-0460">Magnesium</keyword>
<keyword id="KW-0472">Membrane</keyword>
<keyword id="KW-0479">Metal-binding</keyword>
<keyword id="KW-0573">Peptidoglycan synthesis</keyword>
<keyword id="KW-1185">Reference proteome</keyword>
<keyword id="KW-0808">Transferase</keyword>
<keyword id="KW-0812">Transmembrane</keyword>
<keyword id="KW-1133">Transmembrane helix</keyword>
<comment type="function">
    <text evidence="2 4">Catalyzes the initial step of the lipid cycle reactions in the biosynthesis of the cell wall peptidoglycan: transfers peptidoglycan precursor phospho-MurNAc-pentapeptide from UDP-MurNAc-pentapeptide onto the lipid carrier undecaprenyl phosphate, yielding undecaprenyl-pyrophosphoryl-MurNAc-pentapeptide, known as lipid I.</text>
</comment>
<comment type="catalytic activity">
    <reaction evidence="2 4">
        <text>UDP-N-acetyl-alpha-D-muramoyl-L-alanyl-gamma-D-glutamyl-L-lysyl-D-alanyl-D-alanine + di-trans,octa-cis-undecaprenyl phosphate = Mur2Ac(oyl-L-Ala-gamma-D-Glu-L-Lys-D-Ala-D-Ala)-di-trans,octa-cis-undecaprenyl diphosphate + UMP</text>
        <dbReference type="Rhea" id="RHEA:21920"/>
        <dbReference type="ChEBI" id="CHEBI:57865"/>
        <dbReference type="ChEBI" id="CHEBI:60032"/>
        <dbReference type="ChEBI" id="CHEBI:60392"/>
        <dbReference type="ChEBI" id="CHEBI:70758"/>
        <dbReference type="EC" id="2.7.8.13"/>
    </reaction>
</comment>
<comment type="cofactor">
    <cofactor evidence="2">
        <name>Mg(2+)</name>
        <dbReference type="ChEBI" id="CHEBI:18420"/>
    </cofactor>
</comment>
<comment type="pathway">
    <text evidence="2">Cell wall biogenesis; peptidoglycan biosynthesis.</text>
</comment>
<comment type="subcellular location">
    <subcellularLocation>
        <location evidence="2 3">Cell membrane</location>
        <topology evidence="2 3">Multi-pass membrane protein</topology>
    </subcellularLocation>
</comment>
<comment type="similarity">
    <text evidence="2 5">Belongs to the glycosyltransferase 4 family. MraY subfamily.</text>
</comment>
<reference key="1">
    <citation type="journal article" date="1997" name="J. Bacteriol.">
        <title>Identification and characterization of cell wall-cell division gene clusters in pathogenic Gram-positive cocci.</title>
        <authorList>
            <person name="Pucci M.J."/>
            <person name="Thanassi J.A."/>
            <person name="Discotto L.F."/>
            <person name="Kessler R.E."/>
            <person name="Dougherty T.J."/>
        </authorList>
    </citation>
    <scope>NUCLEOTIDE SEQUENCE [GENOMIC DNA]</scope>
</reference>
<reference key="2">
    <citation type="journal article" date="1998" name="J. Bacteriol.">
        <title>Penicillin-binding protein 1 of Staphylococcus aureus is essential for growth.</title>
        <authorList>
            <person name="Wada A."/>
            <person name="Watanabe H."/>
        </authorList>
    </citation>
    <scope>NUCLEOTIDE SEQUENCE [GENOMIC DNA]</scope>
</reference>
<reference key="3">
    <citation type="book" date="2006" name="Gram positive pathogens, 2nd edition">
        <title>The Staphylococcus aureus NCTC 8325 genome.</title>
        <editorList>
            <person name="Fischetti V."/>
            <person name="Novick R."/>
            <person name="Ferretti J."/>
            <person name="Portnoy D."/>
            <person name="Rood J."/>
        </editorList>
        <authorList>
            <person name="Gillaspy A.F."/>
            <person name="Worrell V."/>
            <person name="Orvis J."/>
            <person name="Roe B.A."/>
            <person name="Dyer D.W."/>
            <person name="Iandolo J.J."/>
        </authorList>
    </citation>
    <scope>NUCLEOTIDE SEQUENCE [LARGE SCALE GENOMIC DNA]</scope>
    <source>
        <strain>NCTC 8325 / PS 47</strain>
    </source>
</reference>
<reference key="4">
    <citation type="journal article" date="1974" name="J. Biol. Chem.">
        <title>On the specificity of phospho-N-acetylmuramyl-pentapeptide translocase. The peptide subunit of uridine diphosphate-N-actylmuramyl-pentapeptide.</title>
        <authorList>
            <person name="Hammes W.P."/>
            <person name="Neuhaus F.C."/>
        </authorList>
    </citation>
    <scope>FUNCTION</scope>
    <scope>CATALYTIC ACTIVITY</scope>
</reference>
<reference key="5">
    <citation type="journal article" date="1999" name="Mol. Microbiol.">
        <title>Topological analysis of the mraY protein catalyzing the first membrane step of peptidoglycan synthesis.</title>
        <authorList>
            <person name="Bouhss A."/>
            <person name="Mengin-Lecreulx D."/>
            <person name="Le Beller D."/>
            <person name="Van Heijenoort J."/>
        </authorList>
    </citation>
    <scope>TOPOLOGY</scope>
    <scope>SUBCELLULAR LOCATION</scope>
</reference>
<accession>Q2FZ93</accession>
<accession>O07322</accession>
<accession>O24815</accession>
<accession>P68784</accession>
<gene>
    <name evidence="2" type="primary">mraY</name>
    <name type="ordered locus">SAOUHSC_01146</name>
</gene>
<sequence>MIFVYALLALVITFVLVPVLIPTLKRMKFGQSIREEGPQSHMKKTGTPTMGGLTFLLSIVITSLVAIIFVDQANPIILLLFVTIGFGLIGFIDDYIIVVKKNNQGLTSKQKFLAQIGIAIIFFVLSNVFHLVNFSTSIHIPFTNVAIPLSFAYVIFIVFWQVGFSNAVNLTDGLDGLATGLSIIGFTMYAIMSFVLGETAIGIFCIIMLFALLGFLPYNINPAKVFMGDTGSLALGGIFATISIMLNQELSLIFIGLVFVIETLSVMLQVASFKLTGKRIFKMSPIHHHFELIGWSEWKVVTVFWAVGLISGLIGLWIGVH</sequence>
<organism>
    <name type="scientific">Staphylococcus aureus (strain NCTC 8325 / PS 47)</name>
    <dbReference type="NCBI Taxonomy" id="93061"/>
    <lineage>
        <taxon>Bacteria</taxon>
        <taxon>Bacillati</taxon>
        <taxon>Bacillota</taxon>
        <taxon>Bacilli</taxon>
        <taxon>Bacillales</taxon>
        <taxon>Staphylococcaceae</taxon>
        <taxon>Staphylococcus</taxon>
    </lineage>
</organism>
<protein>
    <recommendedName>
        <fullName evidence="2">Phospho-N-acetylmuramoyl-pentapeptide-transferase</fullName>
        <ecNumber evidence="2 4">2.7.8.13</ecNumber>
    </recommendedName>
    <alternativeName>
        <fullName evidence="2">UDP-MurNAc-pentapeptide phosphotransferase</fullName>
    </alternativeName>
</protein>
<dbReference type="EC" id="2.7.8.13" evidence="2 4"/>
<dbReference type="EMBL" id="U94706">
    <property type="protein sequence ID" value="AAC45625.1"/>
    <property type="molecule type" value="Genomic_DNA"/>
</dbReference>
<dbReference type="EMBL" id="AB007500">
    <property type="protein sequence ID" value="BAA22555.1"/>
    <property type="molecule type" value="Genomic_DNA"/>
</dbReference>
<dbReference type="EMBL" id="CP000253">
    <property type="protein sequence ID" value="ABD30256.1"/>
    <property type="molecule type" value="Genomic_DNA"/>
</dbReference>
<dbReference type="RefSeq" id="WP_000578458.1">
    <property type="nucleotide sequence ID" value="NZ_LS483365.1"/>
</dbReference>
<dbReference type="RefSeq" id="YP_499688.1">
    <property type="nucleotide sequence ID" value="NC_007795.1"/>
</dbReference>
<dbReference type="SMR" id="Q2FZ93"/>
<dbReference type="STRING" id="93061.SAOUHSC_01146"/>
<dbReference type="PaxDb" id="1280-SAXN108_1180"/>
<dbReference type="GeneID" id="3920706"/>
<dbReference type="KEGG" id="sao:SAOUHSC_01146"/>
<dbReference type="PATRIC" id="fig|93061.5.peg.1051"/>
<dbReference type="eggNOG" id="COG0472">
    <property type="taxonomic scope" value="Bacteria"/>
</dbReference>
<dbReference type="HOGENOM" id="CLU_023982_0_1_9"/>
<dbReference type="OrthoDB" id="9805475at2"/>
<dbReference type="UniPathway" id="UPA00219"/>
<dbReference type="PRO" id="PR:Q2FZ93"/>
<dbReference type="Proteomes" id="UP000008816">
    <property type="component" value="Chromosome"/>
</dbReference>
<dbReference type="GO" id="GO:0005886">
    <property type="term" value="C:plasma membrane"/>
    <property type="evidence" value="ECO:0000318"/>
    <property type="project" value="GO_Central"/>
</dbReference>
<dbReference type="GO" id="GO:0046872">
    <property type="term" value="F:metal ion binding"/>
    <property type="evidence" value="ECO:0007669"/>
    <property type="project" value="UniProtKB-KW"/>
</dbReference>
<dbReference type="GO" id="GO:0008963">
    <property type="term" value="F:phospho-N-acetylmuramoyl-pentapeptide-transferase activity"/>
    <property type="evidence" value="ECO:0007669"/>
    <property type="project" value="UniProtKB-UniRule"/>
</dbReference>
<dbReference type="GO" id="GO:0016780">
    <property type="term" value="F:phosphotransferase activity, for other substituted phosphate groups"/>
    <property type="evidence" value="ECO:0000318"/>
    <property type="project" value="GO_Central"/>
</dbReference>
<dbReference type="GO" id="GO:0051301">
    <property type="term" value="P:cell division"/>
    <property type="evidence" value="ECO:0007669"/>
    <property type="project" value="UniProtKB-KW"/>
</dbReference>
<dbReference type="GO" id="GO:0044038">
    <property type="term" value="P:cell wall macromolecule biosynthetic process"/>
    <property type="evidence" value="ECO:0000318"/>
    <property type="project" value="GO_Central"/>
</dbReference>
<dbReference type="GO" id="GO:0071555">
    <property type="term" value="P:cell wall organization"/>
    <property type="evidence" value="ECO:0000318"/>
    <property type="project" value="GO_Central"/>
</dbReference>
<dbReference type="GO" id="GO:0009252">
    <property type="term" value="P:peptidoglycan biosynthetic process"/>
    <property type="evidence" value="ECO:0007669"/>
    <property type="project" value="UniProtKB-UniRule"/>
</dbReference>
<dbReference type="GO" id="GO:0008360">
    <property type="term" value="P:regulation of cell shape"/>
    <property type="evidence" value="ECO:0007669"/>
    <property type="project" value="UniProtKB-KW"/>
</dbReference>
<dbReference type="CDD" id="cd06852">
    <property type="entry name" value="GT_MraY"/>
    <property type="match status" value="1"/>
</dbReference>
<dbReference type="HAMAP" id="MF_00038">
    <property type="entry name" value="MraY"/>
    <property type="match status" value="1"/>
</dbReference>
<dbReference type="InterPro" id="IPR000715">
    <property type="entry name" value="Glycosyl_transferase_4"/>
</dbReference>
<dbReference type="InterPro" id="IPR003524">
    <property type="entry name" value="PNAcMuramoyl-5peptid_Trfase"/>
</dbReference>
<dbReference type="InterPro" id="IPR018480">
    <property type="entry name" value="PNAcMuramoyl-5peptid_Trfase_CS"/>
</dbReference>
<dbReference type="NCBIfam" id="TIGR00445">
    <property type="entry name" value="mraY"/>
    <property type="match status" value="1"/>
</dbReference>
<dbReference type="PANTHER" id="PTHR22926">
    <property type="entry name" value="PHOSPHO-N-ACETYLMURAMOYL-PENTAPEPTIDE-TRANSFERASE"/>
    <property type="match status" value="1"/>
</dbReference>
<dbReference type="PANTHER" id="PTHR22926:SF5">
    <property type="entry name" value="PHOSPHO-N-ACETYLMURAMOYL-PENTAPEPTIDE-TRANSFERASE HOMOLOG"/>
    <property type="match status" value="1"/>
</dbReference>
<dbReference type="Pfam" id="PF00953">
    <property type="entry name" value="Glycos_transf_4"/>
    <property type="match status" value="1"/>
</dbReference>
<dbReference type="PROSITE" id="PS01347">
    <property type="entry name" value="MRAY_1"/>
    <property type="match status" value="1"/>
</dbReference>
<dbReference type="PROSITE" id="PS01348">
    <property type="entry name" value="MRAY_2"/>
    <property type="match status" value="1"/>
</dbReference>
<proteinExistence type="evidence at protein level"/>